<organism>
    <name type="scientific">Drosophila melanogaster</name>
    <name type="common">Fruit fly</name>
    <dbReference type="NCBI Taxonomy" id="7227"/>
    <lineage>
        <taxon>Eukaryota</taxon>
        <taxon>Metazoa</taxon>
        <taxon>Ecdysozoa</taxon>
        <taxon>Arthropoda</taxon>
        <taxon>Hexapoda</taxon>
        <taxon>Insecta</taxon>
        <taxon>Pterygota</taxon>
        <taxon>Neoptera</taxon>
        <taxon>Endopterygota</taxon>
        <taxon>Diptera</taxon>
        <taxon>Brachycera</taxon>
        <taxon>Muscomorpha</taxon>
        <taxon>Ephydroidea</taxon>
        <taxon>Drosophilidae</taxon>
        <taxon>Drosophila</taxon>
        <taxon>Sophophora</taxon>
    </lineage>
</organism>
<proteinExistence type="inferred from homology"/>
<reference key="1">
    <citation type="journal article" date="2000" name="Science">
        <title>The genome sequence of Drosophila melanogaster.</title>
        <authorList>
            <person name="Adams M.D."/>
            <person name="Celniker S.E."/>
            <person name="Holt R.A."/>
            <person name="Evans C.A."/>
            <person name="Gocayne J.D."/>
            <person name="Amanatides P.G."/>
            <person name="Scherer S.E."/>
            <person name="Li P.W."/>
            <person name="Hoskins R.A."/>
            <person name="Galle R.F."/>
            <person name="George R.A."/>
            <person name="Lewis S.E."/>
            <person name="Richards S."/>
            <person name="Ashburner M."/>
            <person name="Henderson S.N."/>
            <person name="Sutton G.G."/>
            <person name="Wortman J.R."/>
            <person name="Yandell M.D."/>
            <person name="Zhang Q."/>
            <person name="Chen L.X."/>
            <person name="Brandon R.C."/>
            <person name="Rogers Y.-H.C."/>
            <person name="Blazej R.G."/>
            <person name="Champe M."/>
            <person name="Pfeiffer B.D."/>
            <person name="Wan K.H."/>
            <person name="Doyle C."/>
            <person name="Baxter E.G."/>
            <person name="Helt G."/>
            <person name="Nelson C.R."/>
            <person name="Miklos G.L.G."/>
            <person name="Abril J.F."/>
            <person name="Agbayani A."/>
            <person name="An H.-J."/>
            <person name="Andrews-Pfannkoch C."/>
            <person name="Baldwin D."/>
            <person name="Ballew R.M."/>
            <person name="Basu A."/>
            <person name="Baxendale J."/>
            <person name="Bayraktaroglu L."/>
            <person name="Beasley E.M."/>
            <person name="Beeson K.Y."/>
            <person name="Benos P.V."/>
            <person name="Berman B.P."/>
            <person name="Bhandari D."/>
            <person name="Bolshakov S."/>
            <person name="Borkova D."/>
            <person name="Botchan M.R."/>
            <person name="Bouck J."/>
            <person name="Brokstein P."/>
            <person name="Brottier P."/>
            <person name="Burtis K.C."/>
            <person name="Busam D.A."/>
            <person name="Butler H."/>
            <person name="Cadieu E."/>
            <person name="Center A."/>
            <person name="Chandra I."/>
            <person name="Cherry J.M."/>
            <person name="Cawley S."/>
            <person name="Dahlke C."/>
            <person name="Davenport L.B."/>
            <person name="Davies P."/>
            <person name="de Pablos B."/>
            <person name="Delcher A."/>
            <person name="Deng Z."/>
            <person name="Mays A.D."/>
            <person name="Dew I."/>
            <person name="Dietz S.M."/>
            <person name="Dodson K."/>
            <person name="Doup L.E."/>
            <person name="Downes M."/>
            <person name="Dugan-Rocha S."/>
            <person name="Dunkov B.C."/>
            <person name="Dunn P."/>
            <person name="Durbin K.J."/>
            <person name="Evangelista C.C."/>
            <person name="Ferraz C."/>
            <person name="Ferriera S."/>
            <person name="Fleischmann W."/>
            <person name="Fosler C."/>
            <person name="Gabrielian A.E."/>
            <person name="Garg N.S."/>
            <person name="Gelbart W.M."/>
            <person name="Glasser K."/>
            <person name="Glodek A."/>
            <person name="Gong F."/>
            <person name="Gorrell J.H."/>
            <person name="Gu Z."/>
            <person name="Guan P."/>
            <person name="Harris M."/>
            <person name="Harris N.L."/>
            <person name="Harvey D.A."/>
            <person name="Heiman T.J."/>
            <person name="Hernandez J.R."/>
            <person name="Houck J."/>
            <person name="Hostin D."/>
            <person name="Houston K.A."/>
            <person name="Howland T.J."/>
            <person name="Wei M.-H."/>
            <person name="Ibegwam C."/>
            <person name="Jalali M."/>
            <person name="Kalush F."/>
            <person name="Karpen G.H."/>
            <person name="Ke Z."/>
            <person name="Kennison J.A."/>
            <person name="Ketchum K.A."/>
            <person name="Kimmel B.E."/>
            <person name="Kodira C.D."/>
            <person name="Kraft C.L."/>
            <person name="Kravitz S."/>
            <person name="Kulp D."/>
            <person name="Lai Z."/>
            <person name="Lasko P."/>
            <person name="Lei Y."/>
            <person name="Levitsky A.A."/>
            <person name="Li J.H."/>
            <person name="Li Z."/>
            <person name="Liang Y."/>
            <person name="Lin X."/>
            <person name="Liu X."/>
            <person name="Mattei B."/>
            <person name="McIntosh T.C."/>
            <person name="McLeod M.P."/>
            <person name="McPherson D."/>
            <person name="Merkulov G."/>
            <person name="Milshina N.V."/>
            <person name="Mobarry C."/>
            <person name="Morris J."/>
            <person name="Moshrefi A."/>
            <person name="Mount S.M."/>
            <person name="Moy M."/>
            <person name="Murphy B."/>
            <person name="Murphy L."/>
            <person name="Muzny D.M."/>
            <person name="Nelson D.L."/>
            <person name="Nelson D.R."/>
            <person name="Nelson K.A."/>
            <person name="Nixon K."/>
            <person name="Nusskern D.R."/>
            <person name="Pacleb J.M."/>
            <person name="Palazzolo M."/>
            <person name="Pittman G.S."/>
            <person name="Pan S."/>
            <person name="Pollard J."/>
            <person name="Puri V."/>
            <person name="Reese M.G."/>
            <person name="Reinert K."/>
            <person name="Remington K."/>
            <person name="Saunders R.D.C."/>
            <person name="Scheeler F."/>
            <person name="Shen H."/>
            <person name="Shue B.C."/>
            <person name="Siden-Kiamos I."/>
            <person name="Simpson M."/>
            <person name="Skupski M.P."/>
            <person name="Smith T.J."/>
            <person name="Spier E."/>
            <person name="Spradling A.C."/>
            <person name="Stapleton M."/>
            <person name="Strong R."/>
            <person name="Sun E."/>
            <person name="Svirskas R."/>
            <person name="Tector C."/>
            <person name="Turner R."/>
            <person name="Venter E."/>
            <person name="Wang A.H."/>
            <person name="Wang X."/>
            <person name="Wang Z.-Y."/>
            <person name="Wassarman D.A."/>
            <person name="Weinstock G.M."/>
            <person name="Weissenbach J."/>
            <person name="Williams S.M."/>
            <person name="Woodage T."/>
            <person name="Worley K.C."/>
            <person name="Wu D."/>
            <person name="Yang S."/>
            <person name="Yao Q.A."/>
            <person name="Ye J."/>
            <person name="Yeh R.-F."/>
            <person name="Zaveri J.S."/>
            <person name="Zhan M."/>
            <person name="Zhang G."/>
            <person name="Zhao Q."/>
            <person name="Zheng L."/>
            <person name="Zheng X.H."/>
            <person name="Zhong F.N."/>
            <person name="Zhong W."/>
            <person name="Zhou X."/>
            <person name="Zhu S.C."/>
            <person name="Zhu X."/>
            <person name="Smith H.O."/>
            <person name="Gibbs R.A."/>
            <person name="Myers E.W."/>
            <person name="Rubin G.M."/>
            <person name="Venter J.C."/>
        </authorList>
    </citation>
    <scope>NUCLEOTIDE SEQUENCE [LARGE SCALE GENOMIC DNA]</scope>
    <source>
        <strain>Berkeley</strain>
    </source>
</reference>
<reference key="2">
    <citation type="journal article" date="2002" name="Genome Biol.">
        <title>Annotation of the Drosophila melanogaster euchromatic genome: a systematic review.</title>
        <authorList>
            <person name="Misra S."/>
            <person name="Crosby M.A."/>
            <person name="Mungall C.J."/>
            <person name="Matthews B.B."/>
            <person name="Campbell K.S."/>
            <person name="Hradecky P."/>
            <person name="Huang Y."/>
            <person name="Kaminker J.S."/>
            <person name="Millburn G.H."/>
            <person name="Prochnik S.E."/>
            <person name="Smith C.D."/>
            <person name="Tupy J.L."/>
            <person name="Whitfield E.J."/>
            <person name="Bayraktaroglu L."/>
            <person name="Berman B.P."/>
            <person name="Bettencourt B.R."/>
            <person name="Celniker S.E."/>
            <person name="de Grey A.D.N.J."/>
            <person name="Drysdale R.A."/>
            <person name="Harris N.L."/>
            <person name="Richter J."/>
            <person name="Russo S."/>
            <person name="Schroeder A.J."/>
            <person name="Shu S.Q."/>
            <person name="Stapleton M."/>
            <person name="Yamada C."/>
            <person name="Ashburner M."/>
            <person name="Gelbart W.M."/>
            <person name="Rubin G.M."/>
            <person name="Lewis S.E."/>
        </authorList>
    </citation>
    <scope>GENOME REANNOTATION</scope>
    <source>
        <strain>Berkeley</strain>
    </source>
</reference>
<reference key="3">
    <citation type="journal article" date="2018" name="Science">
        <title>An evolutionarily conserved gene family encodes proton-selective ion channels.</title>
        <authorList>
            <person name="Tu Y.H."/>
            <person name="Cooper A.J."/>
            <person name="Teng B."/>
            <person name="Chang R.B."/>
            <person name="Artiga D.J."/>
            <person name="Turner H.N."/>
            <person name="Mulhall E.M."/>
            <person name="Ye W."/>
            <person name="Smith A.D."/>
            <person name="Liman E.R."/>
        </authorList>
    </citation>
    <scope>FUNCTION</scope>
</reference>
<name>OTOP_DROME</name>
<keyword id="KW-0025">Alternative splicing</keyword>
<keyword id="KW-1003">Cell membrane</keyword>
<keyword id="KW-0325">Glycoprotein</keyword>
<keyword id="KW-0375">Hydrogen ion transport</keyword>
<keyword id="KW-0407">Ion channel</keyword>
<keyword id="KW-0406">Ion transport</keyword>
<keyword id="KW-0472">Membrane</keyword>
<keyword id="KW-1185">Reference proteome</keyword>
<keyword id="KW-0812">Transmembrane</keyword>
<keyword id="KW-1133">Transmembrane helix</keyword>
<keyword id="KW-0813">Transport</keyword>
<feature type="chain" id="PRO_0000443805" description="Proton channel OtopLc">
    <location>
        <begin position="1"/>
        <end position="1576"/>
    </location>
</feature>
<feature type="transmembrane region" description="Helical" evidence="2">
    <location>
        <begin position="741"/>
        <end position="761"/>
    </location>
</feature>
<feature type="transmembrane region" description="Helical" evidence="2">
    <location>
        <begin position="891"/>
        <end position="911"/>
    </location>
</feature>
<feature type="transmembrane region" description="Helical" evidence="2">
    <location>
        <begin position="931"/>
        <end position="951"/>
    </location>
</feature>
<feature type="transmembrane region" description="Helical" evidence="2">
    <location>
        <begin position="1019"/>
        <end position="1039"/>
    </location>
</feature>
<feature type="transmembrane region" description="Helical" evidence="2">
    <location>
        <begin position="1051"/>
        <end position="1071"/>
    </location>
</feature>
<feature type="transmembrane region" description="Helical" evidence="2">
    <location>
        <begin position="1084"/>
        <end position="1104"/>
    </location>
</feature>
<feature type="transmembrane region" description="Helical" evidence="2">
    <location>
        <begin position="1179"/>
        <end position="1199"/>
    </location>
</feature>
<feature type="transmembrane region" description="Helical" evidence="2">
    <location>
        <begin position="1239"/>
        <end position="1259"/>
    </location>
</feature>
<feature type="transmembrane region" description="Helical" evidence="2">
    <location>
        <begin position="1272"/>
        <end position="1292"/>
    </location>
</feature>
<feature type="transmembrane region" description="Helical" evidence="2">
    <location>
        <begin position="1310"/>
        <end position="1330"/>
    </location>
</feature>
<feature type="transmembrane region" description="Helical" evidence="2">
    <location>
        <begin position="1340"/>
        <end position="1360"/>
    </location>
</feature>
<feature type="transmembrane region" description="Helical" evidence="2">
    <location>
        <begin position="1381"/>
        <end position="1401"/>
    </location>
</feature>
<feature type="transmembrane region" description="Helical" evidence="2">
    <location>
        <begin position="1412"/>
        <end position="1432"/>
    </location>
</feature>
<feature type="region of interest" description="Disordered" evidence="4">
    <location>
        <begin position="1"/>
        <end position="602"/>
    </location>
</feature>
<feature type="region of interest" description="Disordered" evidence="4">
    <location>
        <begin position="621"/>
        <end position="736"/>
    </location>
</feature>
<feature type="region of interest" description="Disordered" evidence="4">
    <location>
        <begin position="771"/>
        <end position="845"/>
    </location>
</feature>
<feature type="region of interest" description="Disordered" evidence="4">
    <location>
        <begin position="962"/>
        <end position="1001"/>
    </location>
</feature>
<feature type="region of interest" description="Disordered" evidence="4">
    <location>
        <begin position="1498"/>
        <end position="1549"/>
    </location>
</feature>
<feature type="compositionally biased region" description="Low complexity" evidence="4">
    <location>
        <begin position="58"/>
        <end position="67"/>
    </location>
</feature>
<feature type="compositionally biased region" description="Low complexity" evidence="4">
    <location>
        <begin position="76"/>
        <end position="85"/>
    </location>
</feature>
<feature type="compositionally biased region" description="Acidic residues" evidence="4">
    <location>
        <begin position="103"/>
        <end position="116"/>
    </location>
</feature>
<feature type="compositionally biased region" description="Acidic residues" evidence="4">
    <location>
        <begin position="159"/>
        <end position="171"/>
    </location>
</feature>
<feature type="compositionally biased region" description="Acidic residues" evidence="4">
    <location>
        <begin position="186"/>
        <end position="198"/>
    </location>
</feature>
<feature type="compositionally biased region" description="Acidic residues" evidence="4">
    <location>
        <begin position="206"/>
        <end position="216"/>
    </location>
</feature>
<feature type="compositionally biased region" description="Pro residues" evidence="4">
    <location>
        <begin position="219"/>
        <end position="228"/>
    </location>
</feature>
<feature type="compositionally biased region" description="Polar residues" evidence="4">
    <location>
        <begin position="229"/>
        <end position="241"/>
    </location>
</feature>
<feature type="compositionally biased region" description="Low complexity" evidence="4">
    <location>
        <begin position="243"/>
        <end position="252"/>
    </location>
</feature>
<feature type="compositionally biased region" description="Pro residues" evidence="4">
    <location>
        <begin position="253"/>
        <end position="264"/>
    </location>
</feature>
<feature type="compositionally biased region" description="Acidic residues" evidence="4">
    <location>
        <begin position="316"/>
        <end position="341"/>
    </location>
</feature>
<feature type="compositionally biased region" description="Basic and acidic residues" evidence="4">
    <location>
        <begin position="347"/>
        <end position="356"/>
    </location>
</feature>
<feature type="compositionally biased region" description="Polar residues" evidence="4">
    <location>
        <begin position="362"/>
        <end position="376"/>
    </location>
</feature>
<feature type="compositionally biased region" description="Basic and acidic residues" evidence="4">
    <location>
        <begin position="384"/>
        <end position="393"/>
    </location>
</feature>
<feature type="compositionally biased region" description="Acidic residues" evidence="4">
    <location>
        <begin position="402"/>
        <end position="419"/>
    </location>
</feature>
<feature type="compositionally biased region" description="Basic and acidic residues" evidence="4">
    <location>
        <begin position="420"/>
        <end position="433"/>
    </location>
</feature>
<feature type="compositionally biased region" description="Polar residues" evidence="4">
    <location>
        <begin position="434"/>
        <end position="457"/>
    </location>
</feature>
<feature type="compositionally biased region" description="Low complexity" evidence="4">
    <location>
        <begin position="465"/>
        <end position="507"/>
    </location>
</feature>
<feature type="compositionally biased region" description="Polar residues" evidence="4">
    <location>
        <begin position="519"/>
        <end position="534"/>
    </location>
</feature>
<feature type="compositionally biased region" description="Polar residues" evidence="4">
    <location>
        <begin position="545"/>
        <end position="555"/>
    </location>
</feature>
<feature type="compositionally biased region" description="Pro residues" evidence="4">
    <location>
        <begin position="563"/>
        <end position="575"/>
    </location>
</feature>
<feature type="compositionally biased region" description="Low complexity" evidence="4">
    <location>
        <begin position="661"/>
        <end position="685"/>
    </location>
</feature>
<feature type="compositionally biased region" description="Basic residues" evidence="4">
    <location>
        <begin position="686"/>
        <end position="709"/>
    </location>
</feature>
<feature type="compositionally biased region" description="Polar residues" evidence="4">
    <location>
        <begin position="776"/>
        <end position="799"/>
    </location>
</feature>
<feature type="compositionally biased region" description="Low complexity" evidence="4">
    <location>
        <begin position="826"/>
        <end position="839"/>
    </location>
</feature>
<feature type="compositionally biased region" description="Polar residues" evidence="4">
    <location>
        <begin position="962"/>
        <end position="973"/>
    </location>
</feature>
<feature type="compositionally biased region" description="Low complexity" evidence="4">
    <location>
        <begin position="1503"/>
        <end position="1512"/>
    </location>
</feature>
<feature type="compositionally biased region" description="Gly residues" evidence="4">
    <location>
        <begin position="1513"/>
        <end position="1528"/>
    </location>
</feature>
<feature type="glycosylation site" description="N-linked (GlcNAc...) asparagine" evidence="3">
    <location>
        <position position="230"/>
    </location>
</feature>
<feature type="glycosylation site" description="N-linked (GlcNAc...) asparagine" evidence="3">
    <location>
        <position position="267"/>
    </location>
</feature>
<feature type="glycosylation site" description="N-linked (GlcNAc...) asparagine" evidence="3">
    <location>
        <position position="1121"/>
    </location>
</feature>
<feature type="glycosylation site" description="N-linked (GlcNAc...) asparagine" evidence="3">
    <location>
        <position position="1479"/>
    </location>
</feature>
<feature type="splice variant" id="VSP_059520" description="In isoform E.">
    <location>
        <begin position="1457"/>
        <end position="1576"/>
    </location>
</feature>
<feature type="splice variant" id="VSP_059521" description="In isoform F.">
    <original>E</original>
    <variation>EVYAHFEFIDAISGHELSFV</variation>
    <location>
        <position position="1576"/>
    </location>
</feature>
<dbReference type="EMBL" id="AE014298">
    <property type="protein sequence ID" value="ACL82892.2"/>
    <property type="molecule type" value="Genomic_DNA"/>
</dbReference>
<dbReference type="EMBL" id="AE014298">
    <property type="protein sequence ID" value="ACL82893.2"/>
    <property type="molecule type" value="Genomic_DNA"/>
</dbReference>
<dbReference type="EMBL" id="AE014298">
    <property type="protein sequence ID" value="ALI51143.1"/>
    <property type="molecule type" value="Genomic_DNA"/>
</dbReference>
<dbReference type="RefSeq" id="NP_001138160.2">
    <molecule id="B7Z0W9-1"/>
    <property type="nucleotide sequence ID" value="NM_001144688.3"/>
</dbReference>
<dbReference type="RefSeq" id="NP_001138161.2">
    <property type="nucleotide sequence ID" value="NM_001144689.3"/>
</dbReference>
<dbReference type="RefSeq" id="NP_001303575.1">
    <property type="nucleotide sequence ID" value="NM_001316646.1"/>
</dbReference>
<dbReference type="FunCoup" id="B7Z0W9">
    <property type="interactions" value="13"/>
</dbReference>
<dbReference type="STRING" id="7227.FBpp0312397"/>
<dbReference type="GlyCosmos" id="B7Z0W9">
    <property type="glycosylation" value="4 sites, No reported glycans"/>
</dbReference>
<dbReference type="GlyGen" id="B7Z0W9">
    <property type="glycosylation" value="11 sites"/>
</dbReference>
<dbReference type="PaxDb" id="7227-FBpp0303595"/>
<dbReference type="EnsemblMetazoa" id="FBtr0331167">
    <molecule id="B7Z0W9-1"/>
    <property type="protein sequence ID" value="FBpp0303594"/>
    <property type="gene ID" value="FBgn0259150"/>
</dbReference>
<dbReference type="EnsemblMetazoa" id="FBtr0331168">
    <property type="protein sequence ID" value="FBpp0303595"/>
    <property type="gene ID" value="FBgn0259150"/>
</dbReference>
<dbReference type="EnsemblMetazoa" id="FBtr0346834">
    <property type="protein sequence ID" value="FBpp0312397"/>
    <property type="gene ID" value="FBgn0259150"/>
</dbReference>
<dbReference type="GeneID" id="7354434"/>
<dbReference type="KEGG" id="dme:Dmel_CG42265"/>
<dbReference type="AGR" id="FB:FBgn0259150"/>
<dbReference type="CTD" id="7354434"/>
<dbReference type="FlyBase" id="FBgn0259150">
    <property type="gene designation" value="OtopLc"/>
</dbReference>
<dbReference type="VEuPathDB" id="VectorBase:FBgn0259150"/>
<dbReference type="eggNOG" id="KOG4740">
    <property type="taxonomic scope" value="Eukaryota"/>
</dbReference>
<dbReference type="HOGENOM" id="CLU_244473_0_0_1"/>
<dbReference type="InParanoid" id="B7Z0W9"/>
<dbReference type="OMA" id="MEVTICE"/>
<dbReference type="OrthoDB" id="6429739at2759"/>
<dbReference type="BioGRID-ORCS" id="7354434">
    <property type="hits" value="0 hits in 1 CRISPR screen"/>
</dbReference>
<dbReference type="GenomeRNAi" id="7354434"/>
<dbReference type="PRO" id="PR:B7Z0W9"/>
<dbReference type="Proteomes" id="UP000000803">
    <property type="component" value="Chromosome X"/>
</dbReference>
<dbReference type="Bgee" id="FBgn0259150">
    <property type="expression patterns" value="Expressed in reticular neuropil associated glial cell (Drosophila) in brain and 113 other cell types or tissues"/>
</dbReference>
<dbReference type="ExpressionAtlas" id="B7Z0W9">
    <property type="expression patterns" value="baseline and differential"/>
</dbReference>
<dbReference type="GO" id="GO:0016020">
    <property type="term" value="C:membrane"/>
    <property type="evidence" value="ECO:0000318"/>
    <property type="project" value="GO_Central"/>
</dbReference>
<dbReference type="GO" id="GO:0005886">
    <property type="term" value="C:plasma membrane"/>
    <property type="evidence" value="ECO:0007669"/>
    <property type="project" value="UniProtKB-SubCell"/>
</dbReference>
<dbReference type="GO" id="GO:0015252">
    <property type="term" value="F:proton channel activity"/>
    <property type="evidence" value="ECO:0000314"/>
    <property type="project" value="UniProtKB"/>
</dbReference>
<dbReference type="GO" id="GO:1902600">
    <property type="term" value="P:proton transmembrane transport"/>
    <property type="evidence" value="ECO:0000314"/>
    <property type="project" value="UniProtKB"/>
</dbReference>
<dbReference type="InterPro" id="IPR004878">
    <property type="entry name" value="Otopetrin"/>
</dbReference>
<dbReference type="PANTHER" id="PTHR21522">
    <property type="entry name" value="PROTON CHANNEL OTOP"/>
    <property type="match status" value="1"/>
</dbReference>
<dbReference type="PANTHER" id="PTHR21522:SF61">
    <property type="entry name" value="PROTON CHANNEL OTOPLC"/>
    <property type="match status" value="1"/>
</dbReference>
<dbReference type="Pfam" id="PF03189">
    <property type="entry name" value="Otopetrin"/>
    <property type="match status" value="1"/>
</dbReference>
<comment type="function">
    <text evidence="5">Proton-selective channel that specifically transports protons into cells. Proton-selective channel activity is probably required in cell types that use changes in intracellular pH for cell signaling or to regulate biochemical or developmental processes.</text>
</comment>
<comment type="subcellular location">
    <subcellularLocation>
        <location evidence="1">Cell membrane</location>
        <topology evidence="2">Multi-pass membrane protein</topology>
    </subcellularLocation>
</comment>
<comment type="alternative products">
    <event type="alternative splicing"/>
    <isoform>
        <id>B7Z0W9-1</id>
        <name>D</name>
        <sequence type="displayed"/>
    </isoform>
    <isoform>
        <id>B7Z0W9-2</id>
        <name>E</name>
        <sequence type="described" ref="VSP_059520"/>
    </isoform>
    <isoform>
        <id>B7Z0W9-3</id>
        <name>F</name>
        <sequence type="described" ref="VSP_059521"/>
    </isoform>
</comment>
<comment type="similarity">
    <text evidence="7">Belongs to the otopetrin family.</text>
</comment>
<accession>B7Z0W9</accession>
<accession>A0A0S0X6R3</accession>
<accession>B7Z0X0</accession>
<evidence type="ECO:0000250" key="1">
    <source>
        <dbReference type="UniProtKB" id="Q80VM9"/>
    </source>
</evidence>
<evidence type="ECO:0000255" key="2"/>
<evidence type="ECO:0000255" key="3">
    <source>
        <dbReference type="PROSITE-ProRule" id="PRU00498"/>
    </source>
</evidence>
<evidence type="ECO:0000256" key="4">
    <source>
        <dbReference type="SAM" id="MobiDB-lite"/>
    </source>
</evidence>
<evidence type="ECO:0000269" key="5">
    <source>
    </source>
</evidence>
<evidence type="ECO:0000303" key="6">
    <source>
    </source>
</evidence>
<evidence type="ECO:0000305" key="7"/>
<evidence type="ECO:0000312" key="8">
    <source>
        <dbReference type="FlyBase" id="FBgn0259150"/>
    </source>
</evidence>
<gene>
    <name evidence="6 8" type="primary">OtopLc</name>
    <name evidence="8" type="ORF">CG42265</name>
</gene>
<sequence length="1576" mass="169751">MDSSPDLSLKLRRGSSDSRDNFYMDFAQGIDSDIEEVDNTANNQEAGEVPPPPLPTVSLAEEVLLLVAPPPPPPSLLGQPLPTLTETDDIPPTPTPPPQQKDDEGDDEDEREEPVPEQDQGAPAAPSPPGSPINSVLELELIPPPPLSPMDDAGLRTDDDGEGEETDDAEEVAAIPPPHEMLDIESNPDEEEEEEEQEQASQEDTPKEEDEEEDDDKSTPPPPLPPLPSNFSYVQGHNLGQVTPPLTKSPSNSPSPPVTPPPCPELNISRMVSPPAQHISQIPPLTPSDESEGEAESQPNSPPLRLDAEQPPPDMDQPEPEDQPPEPENEPEPEPEPEPEPEPVSGAREDYSRSLDNEDESTTITTPPSNGYSASSIIAPPPEHFAELDEDRGFIPPPPLEQEPEEEVEEEEEEEEEELTKETDEISVDRESLQDQGGDSISSPRPASILTGSISTSVGGGAGGSPKPESRGPSRSGSQRSQLRSGSQQGSIAESRGGSRIGSRTGSVASAQAAGVLSPQASLKSQTSIRSQGQAGVRSPAGSIKSGSQRMQSPQAGEGAPAMPSPPLMRSPPPELARQMHSPPRITTPPRVCSPPLVSSPPKLAESAAAAVGVAATVKEQIGSSSSTAEPLEPSKPEPLKPPIATVSYQDEQKPSPPPTAAAAPAVTTTAATTAVTSQPRSHFTSSHHHYHLPHQFQHPHHQNHHTHSVRVPTPTVPSSYAPPPPPDSGSSSSPVDRRRLFMAGVAPPIAAGAGSLMAMPAEPAVAISPGRVSARSGSQHHVTIDESSLPSHKGNIQETPGPSGLIIGGGDGDGDRDIGGGGGPDSSDPPSSPGGSSSQPALSGSQADGQLALMYHSHQLTNYPVLPAIKRTHRPSFVYPPMPRVKAGDALATLFSALYGKLLVVMGIAFPMAEVISTYIPPSFYEVYYLYLYIGSMIFLLFMYATLIWGRPKLPVPIASPSKSATKASGTDSMDESDTDSNSVHHRLPPPIPVRRPSLLSPLGRRDAHYGSFYLRMGAVAFGIGSMIYSGLEFGQYFELNPDTKCHNVLLALTPATRMAFIFIQMYFIFLNNEQIKVYRYKIIARFGLMHMIGTNLAVWLNVLIQETKHEILTFYNPENRTLRISHRIPGHSRGHAIIQHDPTAHLRVPRGLKGPYQIFECRRTNIIGTLVQDASPFLFPCTIEYSLICAAILYVMWRSISRPQTPTPQRPDMISSPMKRSPHHYSVDCARAHKGLFVGILILVLTIISLIIFFVLISRPEFVAMAVTEVTICELLIYGTATIATLVGMIQIRHLQYDAYRSFSLDDILLVGAQTGSFLYNIFTVIAGHFTLRSDDMLVPINALASIVQTACQTMFILDASRRQAVSPEHLRKKPGREIVTFMLVVNLAMWAISTLEKSRAESHPIQLNFYGLWAWTIITHVSMPLAIFYRFHSTVCLCEIWKRAYKLKPTYMXEFARSRIQSIAQQQQFCEDLKTNLSYCYCSTTLAGGELETVEEVDSGESNSAEDAGAGAGSGGSRGSGGGAGAAEAGEAGEEGQQGGDSSCGLKAPIRALSPQSLNTEKAFCPVYVINGE</sequence>
<protein>
    <recommendedName>
        <fullName evidence="7">Proton channel OtopLc</fullName>
    </recommendedName>
    <alternativeName>
        <fullName evidence="6">Otopetrin-Lc</fullName>
        <shortName evidence="6">DmOtopLc</shortName>
    </alternativeName>
</protein>